<evidence type="ECO:0000255" key="1">
    <source>
        <dbReference type="PROSITE-ProRule" id="PRU00174"/>
    </source>
</evidence>
<evidence type="ECO:0000305" key="2"/>
<organism>
    <name type="scientific">Dictyostelium discoideum</name>
    <name type="common">Social amoeba</name>
    <dbReference type="NCBI Taxonomy" id="44689"/>
    <lineage>
        <taxon>Eukaryota</taxon>
        <taxon>Amoebozoa</taxon>
        <taxon>Evosea</taxon>
        <taxon>Eumycetozoa</taxon>
        <taxon>Dictyostelia</taxon>
        <taxon>Dictyosteliales</taxon>
        <taxon>Dictyosteliaceae</taxon>
        <taxon>Dictyostelium</taxon>
    </lineage>
</organism>
<gene>
    <name type="primary">cupI</name>
    <name type="ORF">DDB_G0272242</name>
</gene>
<proteinExistence type="inferred from homology"/>
<dbReference type="EMBL" id="AAFI02000008">
    <property type="protein sequence ID" value="EAL71273.1"/>
    <property type="molecule type" value="Genomic_DNA"/>
</dbReference>
<dbReference type="RefSeq" id="XP_645310.1">
    <property type="nucleotide sequence ID" value="XM_640218.1"/>
</dbReference>
<dbReference type="SMR" id="Q75JP7"/>
<dbReference type="FunCoup" id="Q75JP7">
    <property type="interactions" value="362"/>
</dbReference>
<dbReference type="GlyGen" id="Q75JP7">
    <property type="glycosylation" value="1 site"/>
</dbReference>
<dbReference type="PaxDb" id="44689-DDB0266361"/>
<dbReference type="EnsemblProtists" id="EAL71273">
    <property type="protein sequence ID" value="EAL71273"/>
    <property type="gene ID" value="DDB_G0272242"/>
</dbReference>
<dbReference type="GeneID" id="8618476"/>
<dbReference type="KEGG" id="ddi:DDB_G0272242"/>
<dbReference type="dictyBase" id="DDB_G0272242">
    <property type="gene designation" value="cupI"/>
</dbReference>
<dbReference type="VEuPathDB" id="AmoebaDB:DDB_G0272242"/>
<dbReference type="eggNOG" id="ENOG502R8B0">
    <property type="taxonomic scope" value="Eukaryota"/>
</dbReference>
<dbReference type="HOGENOM" id="CLU_418846_0_0_1"/>
<dbReference type="InParanoid" id="Q75JP7"/>
<dbReference type="OMA" id="WQIDEND"/>
<dbReference type="PhylomeDB" id="Q75JP7"/>
<dbReference type="PRO" id="PR:Q75JP7"/>
<dbReference type="Proteomes" id="UP000002195">
    <property type="component" value="Chromosome 2"/>
</dbReference>
<dbReference type="GO" id="GO:0005737">
    <property type="term" value="C:cytoplasm"/>
    <property type="evidence" value="ECO:0007669"/>
    <property type="project" value="UniProtKB-ARBA"/>
</dbReference>
<dbReference type="GO" id="GO:0005634">
    <property type="term" value="C:nucleus"/>
    <property type="evidence" value="ECO:0007669"/>
    <property type="project" value="UniProtKB-ARBA"/>
</dbReference>
<dbReference type="GO" id="GO:0030246">
    <property type="term" value="F:carbohydrate binding"/>
    <property type="evidence" value="ECO:0007669"/>
    <property type="project" value="UniProtKB-KW"/>
</dbReference>
<dbReference type="GO" id="GO:0043157">
    <property type="term" value="P:response to cation stress"/>
    <property type="evidence" value="ECO:0007669"/>
    <property type="project" value="UniProtKB-ARBA"/>
</dbReference>
<dbReference type="CDD" id="cd00161">
    <property type="entry name" value="beta-trefoil_Ricin-like"/>
    <property type="match status" value="1"/>
</dbReference>
<dbReference type="Gene3D" id="2.80.10.50">
    <property type="match status" value="1"/>
</dbReference>
<dbReference type="InterPro" id="IPR051780">
    <property type="entry name" value="Ca_Up-reg_Membrane_Reg"/>
</dbReference>
<dbReference type="InterPro" id="IPR035992">
    <property type="entry name" value="Ricin_B-like_lectins"/>
</dbReference>
<dbReference type="InterPro" id="IPR000772">
    <property type="entry name" value="Ricin_B_lectin"/>
</dbReference>
<dbReference type="PANTHER" id="PTHR31599">
    <property type="entry name" value="CALCIUM UP-REGULATED PROTEIN A-RELATED"/>
    <property type="match status" value="1"/>
</dbReference>
<dbReference type="PANTHER" id="PTHR31599:SF3">
    <property type="entry name" value="CALCIUM UP-REGULATED PROTEIN I-RELATED"/>
    <property type="match status" value="1"/>
</dbReference>
<dbReference type="Pfam" id="PF00652">
    <property type="entry name" value="Ricin_B_lectin"/>
    <property type="match status" value="1"/>
</dbReference>
<dbReference type="SMART" id="SM00458">
    <property type="entry name" value="RICIN"/>
    <property type="match status" value="1"/>
</dbReference>
<dbReference type="SUPFAM" id="SSF50370">
    <property type="entry name" value="Ricin B-like lectins"/>
    <property type="match status" value="1"/>
</dbReference>
<dbReference type="PROSITE" id="PS50231">
    <property type="entry name" value="RICIN_B_LECTIN"/>
    <property type="match status" value="1"/>
</dbReference>
<accession>Q75JP7</accession>
<accession>Q559M4</accession>
<reference key="1">
    <citation type="journal article" date="2002" name="Nature">
        <title>Sequence and analysis of chromosome 2 of Dictyostelium discoideum.</title>
        <authorList>
            <person name="Gloeckner G."/>
            <person name="Eichinger L."/>
            <person name="Szafranski K."/>
            <person name="Pachebat J.A."/>
            <person name="Bankier A.T."/>
            <person name="Dear P.H."/>
            <person name="Lehmann R."/>
            <person name="Baumgart C."/>
            <person name="Parra G."/>
            <person name="Abril J.F."/>
            <person name="Guigo R."/>
            <person name="Kumpf K."/>
            <person name="Tunggal B."/>
            <person name="Cox E.C."/>
            <person name="Quail M.A."/>
            <person name="Platzer M."/>
            <person name="Rosenthal A."/>
            <person name="Noegel A.A."/>
        </authorList>
    </citation>
    <scope>NUCLEOTIDE SEQUENCE [LARGE SCALE GENOMIC DNA]</scope>
    <source>
        <strain>AX4</strain>
    </source>
</reference>
<reference key="2">
    <citation type="journal article" date="2005" name="Nature">
        <title>The genome of the social amoeba Dictyostelium discoideum.</title>
        <authorList>
            <person name="Eichinger L."/>
            <person name="Pachebat J.A."/>
            <person name="Gloeckner G."/>
            <person name="Rajandream M.A."/>
            <person name="Sucgang R."/>
            <person name="Berriman M."/>
            <person name="Song J."/>
            <person name="Olsen R."/>
            <person name="Szafranski K."/>
            <person name="Xu Q."/>
            <person name="Tunggal B."/>
            <person name="Kummerfeld S."/>
            <person name="Madera M."/>
            <person name="Konfortov B.A."/>
            <person name="Rivero F."/>
            <person name="Bankier A.T."/>
            <person name="Lehmann R."/>
            <person name="Hamlin N."/>
            <person name="Davies R."/>
            <person name="Gaudet P."/>
            <person name="Fey P."/>
            <person name="Pilcher K."/>
            <person name="Chen G."/>
            <person name="Saunders D."/>
            <person name="Sodergren E.J."/>
            <person name="Davis P."/>
            <person name="Kerhornou A."/>
            <person name="Nie X."/>
            <person name="Hall N."/>
            <person name="Anjard C."/>
            <person name="Hemphill L."/>
            <person name="Bason N."/>
            <person name="Farbrother P."/>
            <person name="Desany B."/>
            <person name="Just E."/>
            <person name="Morio T."/>
            <person name="Rost R."/>
            <person name="Churcher C.M."/>
            <person name="Cooper J."/>
            <person name="Haydock S."/>
            <person name="van Driessche N."/>
            <person name="Cronin A."/>
            <person name="Goodhead I."/>
            <person name="Muzny D.M."/>
            <person name="Mourier T."/>
            <person name="Pain A."/>
            <person name="Lu M."/>
            <person name="Harper D."/>
            <person name="Lindsay R."/>
            <person name="Hauser H."/>
            <person name="James K.D."/>
            <person name="Quiles M."/>
            <person name="Madan Babu M."/>
            <person name="Saito T."/>
            <person name="Buchrieser C."/>
            <person name="Wardroper A."/>
            <person name="Felder M."/>
            <person name="Thangavelu M."/>
            <person name="Johnson D."/>
            <person name="Knights A."/>
            <person name="Loulseged H."/>
            <person name="Mungall K.L."/>
            <person name="Oliver K."/>
            <person name="Price C."/>
            <person name="Quail M.A."/>
            <person name="Urushihara H."/>
            <person name="Hernandez J."/>
            <person name="Rabbinowitsch E."/>
            <person name="Steffen D."/>
            <person name="Sanders M."/>
            <person name="Ma J."/>
            <person name="Kohara Y."/>
            <person name="Sharp S."/>
            <person name="Simmonds M.N."/>
            <person name="Spiegler S."/>
            <person name="Tivey A."/>
            <person name="Sugano S."/>
            <person name="White B."/>
            <person name="Walker D."/>
            <person name="Woodward J.R."/>
            <person name="Winckler T."/>
            <person name="Tanaka Y."/>
            <person name="Shaulsky G."/>
            <person name="Schleicher M."/>
            <person name="Weinstock G.M."/>
            <person name="Rosenthal A."/>
            <person name="Cox E.C."/>
            <person name="Chisholm R.L."/>
            <person name="Gibbs R.A."/>
            <person name="Loomis W.F."/>
            <person name="Platzer M."/>
            <person name="Kay R.R."/>
            <person name="Williams J.G."/>
            <person name="Dear P.H."/>
            <person name="Noegel A.A."/>
            <person name="Barrell B.G."/>
            <person name="Kuspa A."/>
        </authorList>
    </citation>
    <scope>NUCLEOTIDE SEQUENCE [LARGE SCALE GENOMIC DNA]</scope>
    <source>
        <strain>AX4</strain>
    </source>
</reference>
<feature type="chain" id="PRO_0000328255" description="Putative calcium up-regulated protein I">
    <location>
        <begin position="1"/>
        <end position="691"/>
    </location>
</feature>
<feature type="domain" description="Ricin B-type lectin" evidence="1">
    <location>
        <begin position="47"/>
        <end position="174"/>
    </location>
</feature>
<keyword id="KW-0430">Lectin</keyword>
<keyword id="KW-1185">Reference proteome</keyword>
<name>CUPI_DICDI</name>
<protein>
    <recommendedName>
        <fullName>Putative calcium up-regulated protein I</fullName>
    </recommendedName>
</protein>
<sequence length="691" mass="76781">MSNKLNKQISTEISECYLKEKPQQSFKKSNEIKMSNELINKISNEISNCYLKEKPQQAKKETKKKSIRSLPTDLPPLKSITPLKSWIFLQCRQMDANGNPLCCGVSGRYTQPGTQCILWQIDENDPSQLWQISKDGHLVSLLAGNYVMDYNNDGTNLAIANGWNNYTSQIWTYNSSTGQIENSNYPNTCLGIKGAFNEPITPTNGTELVIDQPIDNNNLCFQWDLVPSYPLNTILTSPPQAFPTFPGDQNTAFIEISQYLSNVDDIRSQYTNLSVSLPFFQSQMSAMSYPSYLSHEEFDFVRDQLSTEFNYAQEIINLIGNYESFHNELFADNSARLNQLATLCQLEIGSDINAMGSVIQVFSGMMYSILEALPGVGPILGNVLQTAVNIGVAASDGHSTIQPDPFQVALSNLWDTLSTNYEALLSNVSNMETMLLQDWGMMVTTHGLIETLSGPNSLAWQSSMTGDLISAAVPGYEISLLQILMPSKYQIYRYDLANNGNVGLPDDIPSSCLWTDPNDSNITYFIADNETTKVYPDDSLMSLIWGNGVSEQEFFLSANGWNFCMSLLNDNIGSGAPTISNNTSTALNFKIQFSPTQIYNYDVPTHSSNFTTEFDNTAIENSYYQITIYDNTNSWVASISVRVDIFVMRGADVSVLSSSCADGYYLGTPNCLQGSFAHSFTGSINIPIFEN</sequence>
<comment type="similarity">
    <text evidence="2">Belongs to the cup family.</text>
</comment>